<name>BBP_MYCMD</name>
<evidence type="ECO:0000250" key="1"/>
<evidence type="ECO:0000255" key="2">
    <source>
        <dbReference type="PROSITE-ProRule" id="PRU00047"/>
    </source>
</evidence>
<evidence type="ECO:0000255" key="3">
    <source>
        <dbReference type="PROSITE-ProRule" id="PRU00117"/>
    </source>
</evidence>
<evidence type="ECO:0000256" key="4">
    <source>
        <dbReference type="SAM" id="MobiDB-lite"/>
    </source>
</evidence>
<evidence type="ECO:0000305" key="5"/>
<feature type="chain" id="PRO_0000256151" description="Branchpoint-bridging protein">
    <location>
        <begin position="1"/>
        <end position="625"/>
    </location>
</feature>
<feature type="domain" description="KH" evidence="3">
    <location>
        <begin position="253"/>
        <end position="330"/>
    </location>
</feature>
<feature type="zinc finger region" description="CCHC-type 1" evidence="2">
    <location>
        <begin position="368"/>
        <end position="385"/>
    </location>
</feature>
<feature type="zinc finger region" description="CCHC-type 2" evidence="2">
    <location>
        <begin position="393"/>
        <end position="410"/>
    </location>
</feature>
<feature type="region of interest" description="Disordered" evidence="4">
    <location>
        <begin position="1"/>
        <end position="154"/>
    </location>
</feature>
<feature type="region of interest" description="Disordered" evidence="4">
    <location>
        <begin position="177"/>
        <end position="206"/>
    </location>
</feature>
<feature type="region of interest" description="Disordered" evidence="4">
    <location>
        <begin position="466"/>
        <end position="533"/>
    </location>
</feature>
<feature type="compositionally biased region" description="Polar residues" evidence="4">
    <location>
        <begin position="1"/>
        <end position="16"/>
    </location>
</feature>
<feature type="compositionally biased region" description="Gly residues" evidence="4">
    <location>
        <begin position="22"/>
        <end position="31"/>
    </location>
</feature>
<feature type="compositionally biased region" description="Low complexity" evidence="4">
    <location>
        <begin position="32"/>
        <end position="61"/>
    </location>
</feature>
<feature type="compositionally biased region" description="Low complexity" evidence="4">
    <location>
        <begin position="70"/>
        <end position="91"/>
    </location>
</feature>
<feature type="compositionally biased region" description="Low complexity" evidence="4">
    <location>
        <begin position="110"/>
        <end position="130"/>
    </location>
</feature>
<feature type="compositionally biased region" description="Basic and acidic residues" evidence="4">
    <location>
        <begin position="177"/>
        <end position="190"/>
    </location>
</feature>
<feature type="compositionally biased region" description="Gly residues" evidence="4">
    <location>
        <begin position="488"/>
        <end position="503"/>
    </location>
</feature>
<feature type="compositionally biased region" description="Low complexity" evidence="4">
    <location>
        <begin position="516"/>
        <end position="533"/>
    </location>
</feature>
<sequence>MSWRSNAQRTGMNAQPLQGARRWGGAGGAGEGPSSSGSPPSSYHQPSHPYQSSYSHQSQPYNAAPAPPTSSSSSSSNPRDAALAAAAAVAASIGIKRDRDRSSDAPGSNSYAAPSLLTSASTADGSGADAGPRKRKSRWGDANDKITIPTAIGANVSAQELDKYAIQVRLDEISRKLRSGDFVPPDRERSPSPPPTYDNQGRRTNTREVRYRKKLEDERVALVDRQLKLDPNFRPPSDYHAIKRNQRPTEKVYLPIKEFPEIKFFGLLVGPRGNTLKTMERQSGAKISIRGKGSVKTGKGKMDADEDEEEMHCVVTADDEASVKKCIKLINQVIETAASTPEGENDHKRNQLRELAALNGTLRDDENQLCKNCGNKGHRAFECPEQRNWTAHIICHRCGGQGHLARDCTQGRAGAFNGAPPGAAGTGNRQFDSEYANLMAELGEPAAAVDGAATAAGGAVGGAAVGPDGKKIPPWRNPEVWSQPGFGAPRGGDAGRGGWGHRGGYNNRGDRAGYNQHQQQQHPHAYHQQQQAYPAYDQSAPTAAPGGAENADQQHRDYSAEWAAYYAAQAAAGGAQGADPSAAAAGTTAAAEGAVDYSKEWEEYYRMQAAAAAQDGSAYAAGTQA</sequence>
<comment type="function">
    <text evidence="1">Necessary for the splicing of pre-mRNA. Has a role in the recognition of the branch site (5'-UACUAAC-3'), the pyrimidine tract and the 3'-splice site at the 3'-end of introns (By similarity).</text>
</comment>
<comment type="subcellular location">
    <subcellularLocation>
        <location evidence="1">Nucleus</location>
    </subcellularLocation>
</comment>
<comment type="similarity">
    <text evidence="5">Belongs to the BBP/SF1 family.</text>
</comment>
<gene>
    <name type="primary">BBP</name>
    <name type="ORF">UMAG_06386</name>
</gene>
<proteinExistence type="inferred from homology"/>
<dbReference type="EMBL" id="CM003162">
    <property type="protein sequence ID" value="KIS65685.1"/>
    <property type="molecule type" value="Genomic_DNA"/>
</dbReference>
<dbReference type="RefSeq" id="XP_011392673.1">
    <property type="nucleotide sequence ID" value="XM_011394371.1"/>
</dbReference>
<dbReference type="SMR" id="Q4P0H7"/>
<dbReference type="FunCoup" id="Q4P0H7">
    <property type="interactions" value="644"/>
</dbReference>
<dbReference type="STRING" id="237631.Q4P0H7"/>
<dbReference type="EnsemblFungi" id="KIS65685">
    <property type="protein sequence ID" value="KIS65685"/>
    <property type="gene ID" value="UMAG_06386"/>
</dbReference>
<dbReference type="GeneID" id="23565988"/>
<dbReference type="KEGG" id="uma:UMAG_06386"/>
<dbReference type="VEuPathDB" id="FungiDB:UMAG_06386"/>
<dbReference type="eggNOG" id="KOG0119">
    <property type="taxonomic scope" value="Eukaryota"/>
</dbReference>
<dbReference type="HOGENOM" id="CLU_016864_3_1_1"/>
<dbReference type="InParanoid" id="Q4P0H7"/>
<dbReference type="OMA" id="DTKNSHK"/>
<dbReference type="OrthoDB" id="6777263at2759"/>
<dbReference type="Proteomes" id="UP000000561">
    <property type="component" value="Chromosome 23"/>
</dbReference>
<dbReference type="GO" id="GO:0000243">
    <property type="term" value="C:commitment complex"/>
    <property type="evidence" value="ECO:0007669"/>
    <property type="project" value="EnsemblFungi"/>
</dbReference>
<dbReference type="GO" id="GO:0005829">
    <property type="term" value="C:cytosol"/>
    <property type="evidence" value="ECO:0007669"/>
    <property type="project" value="EnsemblFungi"/>
</dbReference>
<dbReference type="GO" id="GO:0005634">
    <property type="term" value="C:nucleus"/>
    <property type="evidence" value="ECO:0000318"/>
    <property type="project" value="GO_Central"/>
</dbReference>
<dbReference type="GO" id="GO:0071004">
    <property type="term" value="C:U2-type prespliceosome"/>
    <property type="evidence" value="ECO:0007669"/>
    <property type="project" value="EnsemblFungi"/>
</dbReference>
<dbReference type="GO" id="GO:0003729">
    <property type="term" value="F:mRNA binding"/>
    <property type="evidence" value="ECO:0000318"/>
    <property type="project" value="GO_Central"/>
</dbReference>
<dbReference type="GO" id="GO:0008270">
    <property type="term" value="F:zinc ion binding"/>
    <property type="evidence" value="ECO:0007669"/>
    <property type="project" value="UniProtKB-KW"/>
</dbReference>
<dbReference type="GO" id="GO:0045292">
    <property type="term" value="P:mRNA cis splicing, via spliceosome"/>
    <property type="evidence" value="ECO:0007669"/>
    <property type="project" value="EnsemblFungi"/>
</dbReference>
<dbReference type="GO" id="GO:0048024">
    <property type="term" value="P:regulation of mRNA splicing, via spliceosome"/>
    <property type="evidence" value="ECO:0000318"/>
    <property type="project" value="GO_Central"/>
</dbReference>
<dbReference type="CDD" id="cd02395">
    <property type="entry name" value="KH-I_BBP"/>
    <property type="match status" value="1"/>
</dbReference>
<dbReference type="FunFam" id="3.30.1370.10:FF:000024">
    <property type="entry name" value="Branchpoint-bridging protein-like protein"/>
    <property type="match status" value="1"/>
</dbReference>
<dbReference type="Gene3D" id="6.10.140.1790">
    <property type="match status" value="1"/>
</dbReference>
<dbReference type="Gene3D" id="3.30.1370.10">
    <property type="entry name" value="K Homology domain, type 1"/>
    <property type="match status" value="1"/>
</dbReference>
<dbReference type="Gene3D" id="4.10.60.10">
    <property type="entry name" value="Zinc finger, CCHC-type"/>
    <property type="match status" value="1"/>
</dbReference>
<dbReference type="InterPro" id="IPR045071">
    <property type="entry name" value="BBP-like"/>
</dbReference>
<dbReference type="InterPro" id="IPR055256">
    <property type="entry name" value="KH_1_KHDC4/BBP-like"/>
</dbReference>
<dbReference type="InterPro" id="IPR004087">
    <property type="entry name" value="KH_dom"/>
</dbReference>
<dbReference type="InterPro" id="IPR036612">
    <property type="entry name" value="KH_dom_type_1_sf"/>
</dbReference>
<dbReference type="InterPro" id="IPR032570">
    <property type="entry name" value="SF1-HH"/>
</dbReference>
<dbReference type="InterPro" id="IPR047086">
    <property type="entry name" value="SF1-HH_sf"/>
</dbReference>
<dbReference type="InterPro" id="IPR001878">
    <property type="entry name" value="Znf_CCHC"/>
</dbReference>
<dbReference type="InterPro" id="IPR036875">
    <property type="entry name" value="Znf_CCHC_sf"/>
</dbReference>
<dbReference type="PANTHER" id="PTHR11208">
    <property type="entry name" value="RNA-BINDING PROTEIN RELATED"/>
    <property type="match status" value="1"/>
</dbReference>
<dbReference type="PANTHER" id="PTHR11208:SF45">
    <property type="entry name" value="SPLICING FACTOR 1"/>
    <property type="match status" value="1"/>
</dbReference>
<dbReference type="Pfam" id="PF22675">
    <property type="entry name" value="KH-I_KHDC4-BBP"/>
    <property type="match status" value="1"/>
</dbReference>
<dbReference type="Pfam" id="PF16275">
    <property type="entry name" value="SF1-HH"/>
    <property type="match status" value="1"/>
</dbReference>
<dbReference type="Pfam" id="PF00098">
    <property type="entry name" value="zf-CCHC"/>
    <property type="match status" value="2"/>
</dbReference>
<dbReference type="SMART" id="SM00322">
    <property type="entry name" value="KH"/>
    <property type="match status" value="1"/>
</dbReference>
<dbReference type="SMART" id="SM00343">
    <property type="entry name" value="ZnF_C2HC"/>
    <property type="match status" value="2"/>
</dbReference>
<dbReference type="SUPFAM" id="SSF54791">
    <property type="entry name" value="Eukaryotic type KH-domain (KH-domain type I)"/>
    <property type="match status" value="1"/>
</dbReference>
<dbReference type="SUPFAM" id="SSF57756">
    <property type="entry name" value="Retrovirus zinc finger-like domains"/>
    <property type="match status" value="1"/>
</dbReference>
<dbReference type="PROSITE" id="PS50084">
    <property type="entry name" value="KH_TYPE_1"/>
    <property type="match status" value="1"/>
</dbReference>
<dbReference type="PROSITE" id="PS50158">
    <property type="entry name" value="ZF_CCHC"/>
    <property type="match status" value="2"/>
</dbReference>
<accession>Q4P0H7</accession>
<accession>A0A0D1DT19</accession>
<protein>
    <recommendedName>
        <fullName>Branchpoint-bridging protein</fullName>
    </recommendedName>
</protein>
<reference key="1">
    <citation type="journal article" date="2006" name="Nature">
        <title>Insights from the genome of the biotrophic fungal plant pathogen Ustilago maydis.</title>
        <authorList>
            <person name="Kaemper J."/>
            <person name="Kahmann R."/>
            <person name="Boelker M."/>
            <person name="Ma L.-J."/>
            <person name="Brefort T."/>
            <person name="Saville B.J."/>
            <person name="Banuett F."/>
            <person name="Kronstad J.W."/>
            <person name="Gold S.E."/>
            <person name="Mueller O."/>
            <person name="Perlin M.H."/>
            <person name="Woesten H.A.B."/>
            <person name="de Vries R."/>
            <person name="Ruiz-Herrera J."/>
            <person name="Reynaga-Pena C.G."/>
            <person name="Snetselaar K."/>
            <person name="McCann M."/>
            <person name="Perez-Martin J."/>
            <person name="Feldbruegge M."/>
            <person name="Basse C.W."/>
            <person name="Steinberg G."/>
            <person name="Ibeas J.I."/>
            <person name="Holloman W."/>
            <person name="Guzman P."/>
            <person name="Farman M.L."/>
            <person name="Stajich J.E."/>
            <person name="Sentandreu R."/>
            <person name="Gonzalez-Prieto J.M."/>
            <person name="Kennell J.C."/>
            <person name="Molina L."/>
            <person name="Schirawski J."/>
            <person name="Mendoza-Mendoza A."/>
            <person name="Greilinger D."/>
            <person name="Muench K."/>
            <person name="Roessel N."/>
            <person name="Scherer M."/>
            <person name="Vranes M."/>
            <person name="Ladendorf O."/>
            <person name="Vincon V."/>
            <person name="Fuchs U."/>
            <person name="Sandrock B."/>
            <person name="Meng S."/>
            <person name="Ho E.C.H."/>
            <person name="Cahill M.J."/>
            <person name="Boyce K.J."/>
            <person name="Klose J."/>
            <person name="Klosterman S.J."/>
            <person name="Deelstra H.J."/>
            <person name="Ortiz-Castellanos L."/>
            <person name="Li W."/>
            <person name="Sanchez-Alonso P."/>
            <person name="Schreier P.H."/>
            <person name="Haeuser-Hahn I."/>
            <person name="Vaupel M."/>
            <person name="Koopmann E."/>
            <person name="Friedrich G."/>
            <person name="Voss H."/>
            <person name="Schlueter T."/>
            <person name="Margolis J."/>
            <person name="Platt D."/>
            <person name="Swimmer C."/>
            <person name="Gnirke A."/>
            <person name="Chen F."/>
            <person name="Vysotskaia V."/>
            <person name="Mannhaupt G."/>
            <person name="Gueldener U."/>
            <person name="Muensterkoetter M."/>
            <person name="Haase D."/>
            <person name="Oesterheld M."/>
            <person name="Mewes H.-W."/>
            <person name="Mauceli E.W."/>
            <person name="DeCaprio D."/>
            <person name="Wade C.M."/>
            <person name="Butler J."/>
            <person name="Young S.K."/>
            <person name="Jaffe D.B."/>
            <person name="Calvo S.E."/>
            <person name="Nusbaum C."/>
            <person name="Galagan J.E."/>
            <person name="Birren B.W."/>
        </authorList>
    </citation>
    <scope>NUCLEOTIDE SEQUENCE [LARGE SCALE GENOMIC DNA]</scope>
    <source>
        <strain>DSM 14603 / FGSC 9021 / UM521</strain>
    </source>
</reference>
<reference key="2">
    <citation type="submission" date="2014-09" db="EMBL/GenBank/DDBJ databases">
        <authorList>
            <person name="Gueldener U."/>
            <person name="Muensterkoetter M."/>
            <person name="Walter M.C."/>
            <person name="Mannhaupt G."/>
            <person name="Kahmann R."/>
        </authorList>
    </citation>
    <scope>GENOME REANNOTATION</scope>
    <source>
        <strain>DSM 14603 / FGSC 9021 / UM521</strain>
    </source>
</reference>
<keyword id="KW-0479">Metal-binding</keyword>
<keyword id="KW-0507">mRNA processing</keyword>
<keyword id="KW-0508">mRNA splicing</keyword>
<keyword id="KW-0539">Nucleus</keyword>
<keyword id="KW-1185">Reference proteome</keyword>
<keyword id="KW-0677">Repeat</keyword>
<keyword id="KW-0694">RNA-binding</keyword>
<keyword id="KW-0747">Spliceosome</keyword>
<keyword id="KW-0862">Zinc</keyword>
<keyword id="KW-0863">Zinc-finger</keyword>
<organism>
    <name type="scientific">Mycosarcoma maydis</name>
    <name type="common">Corn smut fungus</name>
    <name type="synonym">Ustilago maydis</name>
    <dbReference type="NCBI Taxonomy" id="5270"/>
    <lineage>
        <taxon>Eukaryota</taxon>
        <taxon>Fungi</taxon>
        <taxon>Dikarya</taxon>
        <taxon>Basidiomycota</taxon>
        <taxon>Ustilaginomycotina</taxon>
        <taxon>Ustilaginomycetes</taxon>
        <taxon>Ustilaginales</taxon>
        <taxon>Ustilaginaceae</taxon>
        <taxon>Mycosarcoma</taxon>
    </lineage>
</organism>